<geneLocation type="plasmid">
    <name>IncFII R100</name>
    <name>NR1</name>
</geneLocation>
<geneLocation type="plasmid">
    <name>R6-5</name>
</geneLocation>
<protein>
    <recommendedName>
        <fullName>Protein TraX</fullName>
    </recommendedName>
</protein>
<comment type="function">
    <text>Responsible for the N-terminal acetylation of F pilin.</text>
</comment>
<comment type="subcellular location">
    <subcellularLocation>
        <location evidence="2">Cell membrane</location>
        <topology evidence="2">Multi-pass membrane protein</topology>
    </subcellularLocation>
</comment>
<comment type="similarity">
    <text evidence="2">Belongs to the TraX family.</text>
</comment>
<proteinExistence type="inferred from homology"/>
<evidence type="ECO:0000255" key="1"/>
<evidence type="ECO:0000305" key="2"/>
<keyword id="KW-1003">Cell membrane</keyword>
<keyword id="KW-0472">Membrane</keyword>
<keyword id="KW-0614">Plasmid</keyword>
<keyword id="KW-0812">Transmembrane</keyword>
<keyword id="KW-1133">Transmembrane helix</keyword>
<dbReference type="EMBL" id="X55815">
    <property type="protein sequence ID" value="CAA39339.1"/>
    <property type="molecule type" value="Genomic_DNA"/>
</dbReference>
<dbReference type="EMBL" id="M38048">
    <property type="protein sequence ID" value="AAA98314.1"/>
    <property type="molecule type" value="Genomic_DNA"/>
</dbReference>
<dbReference type="PIR" id="JQ1340">
    <property type="entry name" value="JQ1340"/>
</dbReference>
<dbReference type="RefSeq" id="NP_957633.1">
    <property type="nucleotide sequence ID" value="NC_005327.1"/>
</dbReference>
<dbReference type="RefSeq" id="WP_000205725.1">
    <property type="nucleotide sequence ID" value="NZ_WWEV01000027.1"/>
</dbReference>
<dbReference type="RefSeq" id="YP_001096502.1">
    <property type="nucleotide sequence ID" value="NC_009133.1"/>
</dbReference>
<dbReference type="RefSeq" id="YP_002456226.1">
    <property type="nucleotide sequence ID" value="NC_011812.1"/>
</dbReference>
<dbReference type="RefSeq" id="YP_003162607.1">
    <property type="nucleotide sequence ID" value="NC_013175.1"/>
</dbReference>
<dbReference type="RefSeq" id="YP_006952272.1">
    <property type="nucleotide sequence ID" value="NC_019057.1"/>
</dbReference>
<dbReference type="RefSeq" id="YP_006953356.1">
    <property type="nucleotide sequence ID" value="NC_019071.1"/>
</dbReference>
<dbReference type="RefSeq" id="YP_006953454.1">
    <property type="nucleotide sequence ID" value="NC_019072.1"/>
</dbReference>
<dbReference type="RefSeq" id="YP_006953981.1">
    <property type="nucleotide sequence ID" value="NC_019090.1"/>
</dbReference>
<dbReference type="RefSeq" id="YP_006954299.1">
    <property type="nucleotide sequence ID" value="NC_019095.1"/>
</dbReference>
<dbReference type="RefSeq" id="YP_006990793.1">
    <property type="nucleotide sequence ID" value="NC_019424.1"/>
</dbReference>
<dbReference type="RefSeq" id="YP_007447579.1">
    <property type="nucleotide sequence ID" value="NC_020278.2"/>
</dbReference>
<dbReference type="RefSeq" id="YP_009068650.1">
    <property type="nucleotide sequence ID" value="NC_025141.1"/>
</dbReference>
<dbReference type="OMA" id="ILMMALW"/>
<dbReference type="GO" id="GO:0005886">
    <property type="term" value="C:plasma membrane"/>
    <property type="evidence" value="ECO:0007669"/>
    <property type="project" value="UniProtKB-SubCell"/>
</dbReference>
<dbReference type="InterPro" id="IPR008875">
    <property type="entry name" value="TraX"/>
</dbReference>
<dbReference type="InterPro" id="IPR014125">
    <property type="entry name" value="TraX_Ftype"/>
</dbReference>
<dbReference type="NCBIfam" id="NF010260">
    <property type="entry name" value="PRK13706.1"/>
    <property type="match status" value="1"/>
</dbReference>
<dbReference type="NCBIfam" id="TIGR02755">
    <property type="entry name" value="TraX_Ftype"/>
    <property type="match status" value="1"/>
</dbReference>
<dbReference type="Pfam" id="PF05857">
    <property type="entry name" value="TraX"/>
    <property type="match status" value="1"/>
</dbReference>
<name>TRAX2_ECOLX</name>
<organism>
    <name type="scientific">Escherichia coli</name>
    <dbReference type="NCBI Taxonomy" id="562"/>
    <lineage>
        <taxon>Bacteria</taxon>
        <taxon>Pseudomonadati</taxon>
        <taxon>Pseudomonadota</taxon>
        <taxon>Gammaproteobacteria</taxon>
        <taxon>Enterobacterales</taxon>
        <taxon>Enterobacteriaceae</taxon>
        <taxon>Escherichia</taxon>
    </lineage>
</organism>
<feature type="chain" id="PRO_0000068479" description="Protein TraX">
    <location>
        <begin position="1"/>
        <end position="248"/>
    </location>
</feature>
<feature type="transmembrane region" description="Helical" evidence="1">
    <location>
        <begin position="39"/>
        <end position="55"/>
    </location>
</feature>
<feature type="transmembrane region" description="Helical" evidence="1">
    <location>
        <begin position="180"/>
        <end position="196"/>
    </location>
</feature>
<feature type="transmembrane region" description="Helical" evidence="1">
    <location>
        <begin position="200"/>
        <end position="216"/>
    </location>
</feature>
<feature type="transmembrane region" description="Helical" evidence="1">
    <location>
        <begin position="232"/>
        <end position="248"/>
    </location>
</feature>
<accession>P22710</accession>
<reference key="1">
    <citation type="journal article" date="1990" name="J. Mol. Biol.">
        <title>Nucleotide sequence of the promoter-distal region of the tra operon of plasmid R100, including traI (DNA helicase I) and traD genes.</title>
        <authorList>
            <person name="Yoshioka Y."/>
            <person name="Fujita Y."/>
            <person name="Ohtsubo E."/>
        </authorList>
    </citation>
    <scope>NUCLEOTIDE SEQUENCE [GENOMIC DNA]</scope>
    <source>
        <plasmid>IncFII R100 (NR1)</plasmid>
    </source>
</reference>
<reference key="2">
    <citation type="journal article" date="1991" name="Gene">
        <title>Sequence and conservation of genes at the distal end of the transfer region on plasmids F and R6-5.</title>
        <authorList>
            <person name="Cram D.S."/>
            <person name="Loh S.M."/>
            <person name="Cheah K.C."/>
            <person name="Skurray R.A."/>
        </authorList>
    </citation>
    <scope>NUCLEOTIDE SEQUENCE [GENOMIC DNA]</scope>
    <source>
        <plasmid>R6-5</plasmid>
    </source>
</reference>
<sequence length="248" mass="27307">MTTDNTNTTRNDSLAARTDTWLQSFLVWSPGQRDIIKTVALVLMVLDHINLIFQLKQEWMFLAGRGAFPLFALVWGLNLSRHAHIRQPAINRLWGWGIIAQFAYYLAGFPWYEGNILFAFAVAAQVLTWCETRSGWRTAAAILLMALWGPLSGTSYGIAGLLMLAVSYRLYRAEDRAERLALLACLLAVIPALNLASSDAAAVAGLVMTVLTVGLVSCAGKSLPRFWPGDFFPVFYACHLAVLGVLAL</sequence>
<gene>
    <name type="primary">traX</name>
</gene>